<evidence type="ECO:0000255" key="1">
    <source>
        <dbReference type="HAMAP-Rule" id="MF_01395"/>
    </source>
</evidence>
<evidence type="ECO:0000255" key="2">
    <source>
        <dbReference type="PROSITE-ProRule" id="PRU01136"/>
    </source>
</evidence>
<evidence type="ECO:0000256" key="3">
    <source>
        <dbReference type="SAM" id="MobiDB-lite"/>
    </source>
</evidence>
<proteinExistence type="inferred from homology"/>
<comment type="function">
    <text evidence="1">Component of the acetyl coenzyme A carboxylase (ACC) complex. Biotin carboxylase (BC) catalyzes the carboxylation of biotin on its carrier protein (BCCP) and then the CO(2) group is transferred by the transcarboxylase to acetyl-CoA to form malonyl-CoA.</text>
</comment>
<comment type="catalytic activity">
    <reaction evidence="1">
        <text>N(6)-carboxybiotinyl-L-lysyl-[protein] + acetyl-CoA = N(6)-biotinyl-L-lysyl-[protein] + malonyl-CoA</text>
        <dbReference type="Rhea" id="RHEA:54728"/>
        <dbReference type="Rhea" id="RHEA-COMP:10505"/>
        <dbReference type="Rhea" id="RHEA-COMP:10506"/>
        <dbReference type="ChEBI" id="CHEBI:57288"/>
        <dbReference type="ChEBI" id="CHEBI:57384"/>
        <dbReference type="ChEBI" id="CHEBI:83144"/>
        <dbReference type="ChEBI" id="CHEBI:83145"/>
        <dbReference type="EC" id="2.1.3.15"/>
    </reaction>
</comment>
<comment type="cofactor">
    <cofactor evidence="1">
        <name>Zn(2+)</name>
        <dbReference type="ChEBI" id="CHEBI:29105"/>
    </cofactor>
    <text evidence="1">Binds 1 zinc ion per subunit.</text>
</comment>
<comment type="pathway">
    <text evidence="1">Lipid metabolism; malonyl-CoA biosynthesis; malonyl-CoA from acetyl-CoA: step 1/1.</text>
</comment>
<comment type="subunit">
    <text evidence="1">Acetyl-CoA carboxylase is a heterohexamer composed of biotin carboxyl carrier protein (AccB), biotin carboxylase (AccC) and two subunits each of ACCase subunit alpha (AccA) and ACCase subunit beta (AccD).</text>
</comment>
<comment type="subcellular location">
    <subcellularLocation>
        <location evidence="1">Cytoplasm</location>
    </subcellularLocation>
</comment>
<comment type="similarity">
    <text evidence="1">Belongs to the AccD/PCCB family.</text>
</comment>
<organism>
    <name type="scientific">Proteus mirabilis (strain HI4320)</name>
    <dbReference type="NCBI Taxonomy" id="529507"/>
    <lineage>
        <taxon>Bacteria</taxon>
        <taxon>Pseudomonadati</taxon>
        <taxon>Pseudomonadota</taxon>
        <taxon>Gammaproteobacteria</taxon>
        <taxon>Enterobacterales</taxon>
        <taxon>Morganellaceae</taxon>
        <taxon>Proteus</taxon>
    </lineage>
</organism>
<reference key="1">
    <citation type="journal article" date="2008" name="J. Bacteriol.">
        <title>Complete genome sequence of uropathogenic Proteus mirabilis, a master of both adherence and motility.</title>
        <authorList>
            <person name="Pearson M.M."/>
            <person name="Sebaihia M."/>
            <person name="Churcher C."/>
            <person name="Quail M.A."/>
            <person name="Seshasayee A.S."/>
            <person name="Luscombe N.M."/>
            <person name="Abdellah Z."/>
            <person name="Arrosmith C."/>
            <person name="Atkin B."/>
            <person name="Chillingworth T."/>
            <person name="Hauser H."/>
            <person name="Jagels K."/>
            <person name="Moule S."/>
            <person name="Mungall K."/>
            <person name="Norbertczak H."/>
            <person name="Rabbinowitsch E."/>
            <person name="Walker D."/>
            <person name="Whithead S."/>
            <person name="Thomson N.R."/>
            <person name="Rather P.N."/>
            <person name="Parkhill J."/>
            <person name="Mobley H.L.T."/>
        </authorList>
    </citation>
    <scope>NUCLEOTIDE SEQUENCE [LARGE SCALE GENOMIC DNA]</scope>
    <source>
        <strain>HI4320</strain>
    </source>
</reference>
<gene>
    <name evidence="1" type="primary">accD</name>
    <name type="ordered locus">PMI1787</name>
</gene>
<protein>
    <recommendedName>
        <fullName evidence="1">Acetyl-coenzyme A carboxylase carboxyl transferase subunit beta</fullName>
        <shortName evidence="1">ACCase subunit beta</shortName>
        <shortName evidence="1">Acetyl-CoA carboxylase carboxyltransferase subunit beta</shortName>
        <ecNumber evidence="1">2.1.3.15</ecNumber>
    </recommendedName>
</protein>
<feature type="chain" id="PRO_0000359029" description="Acetyl-coenzyme A carboxylase carboxyl transferase subunit beta">
    <location>
        <begin position="1"/>
        <end position="320"/>
    </location>
</feature>
<feature type="domain" description="CoA carboxyltransferase N-terminal" evidence="2">
    <location>
        <begin position="25"/>
        <end position="294"/>
    </location>
</feature>
<feature type="zinc finger region" description="C4-type" evidence="1">
    <location>
        <begin position="29"/>
        <end position="51"/>
    </location>
</feature>
<feature type="region of interest" description="Disordered" evidence="3">
    <location>
        <begin position="295"/>
        <end position="320"/>
    </location>
</feature>
<feature type="compositionally biased region" description="Acidic residues" evidence="3">
    <location>
        <begin position="295"/>
        <end position="310"/>
    </location>
</feature>
<feature type="binding site" evidence="1">
    <location>
        <position position="29"/>
    </location>
    <ligand>
        <name>Zn(2+)</name>
        <dbReference type="ChEBI" id="CHEBI:29105"/>
    </ligand>
</feature>
<feature type="binding site" evidence="1">
    <location>
        <position position="32"/>
    </location>
    <ligand>
        <name>Zn(2+)</name>
        <dbReference type="ChEBI" id="CHEBI:29105"/>
    </ligand>
</feature>
<feature type="binding site" evidence="1">
    <location>
        <position position="48"/>
    </location>
    <ligand>
        <name>Zn(2+)</name>
        <dbReference type="ChEBI" id="CHEBI:29105"/>
    </ligand>
</feature>
<feature type="binding site" evidence="1">
    <location>
        <position position="51"/>
    </location>
    <ligand>
        <name>Zn(2+)</name>
        <dbReference type="ChEBI" id="CHEBI:29105"/>
    </ligand>
</feature>
<dbReference type="EC" id="2.1.3.15" evidence="1"/>
<dbReference type="EMBL" id="AM942759">
    <property type="protein sequence ID" value="CAR43716.1"/>
    <property type="molecule type" value="Genomic_DNA"/>
</dbReference>
<dbReference type="RefSeq" id="WP_004243734.1">
    <property type="nucleotide sequence ID" value="NC_010554.1"/>
</dbReference>
<dbReference type="SMR" id="B4EZF5"/>
<dbReference type="EnsemblBacteria" id="CAR43716">
    <property type="protein sequence ID" value="CAR43716"/>
    <property type="gene ID" value="PMI1787"/>
</dbReference>
<dbReference type="GeneID" id="6802346"/>
<dbReference type="KEGG" id="pmr:PMI1787"/>
<dbReference type="eggNOG" id="COG0777">
    <property type="taxonomic scope" value="Bacteria"/>
</dbReference>
<dbReference type="HOGENOM" id="CLU_015486_1_0_6"/>
<dbReference type="UniPathway" id="UPA00655">
    <property type="reaction ID" value="UER00711"/>
</dbReference>
<dbReference type="Proteomes" id="UP000008319">
    <property type="component" value="Chromosome"/>
</dbReference>
<dbReference type="GO" id="GO:0009329">
    <property type="term" value="C:acetate CoA-transferase complex"/>
    <property type="evidence" value="ECO:0007669"/>
    <property type="project" value="TreeGrafter"/>
</dbReference>
<dbReference type="GO" id="GO:0003989">
    <property type="term" value="F:acetyl-CoA carboxylase activity"/>
    <property type="evidence" value="ECO:0007669"/>
    <property type="project" value="InterPro"/>
</dbReference>
<dbReference type="GO" id="GO:0005524">
    <property type="term" value="F:ATP binding"/>
    <property type="evidence" value="ECO:0007669"/>
    <property type="project" value="UniProtKB-KW"/>
</dbReference>
<dbReference type="GO" id="GO:0016743">
    <property type="term" value="F:carboxyl- or carbamoyltransferase activity"/>
    <property type="evidence" value="ECO:0007669"/>
    <property type="project" value="UniProtKB-UniRule"/>
</dbReference>
<dbReference type="GO" id="GO:0008270">
    <property type="term" value="F:zinc ion binding"/>
    <property type="evidence" value="ECO:0007669"/>
    <property type="project" value="UniProtKB-UniRule"/>
</dbReference>
<dbReference type="GO" id="GO:0006633">
    <property type="term" value="P:fatty acid biosynthetic process"/>
    <property type="evidence" value="ECO:0007669"/>
    <property type="project" value="UniProtKB-KW"/>
</dbReference>
<dbReference type="GO" id="GO:2001295">
    <property type="term" value="P:malonyl-CoA biosynthetic process"/>
    <property type="evidence" value="ECO:0007669"/>
    <property type="project" value="UniProtKB-UniRule"/>
</dbReference>
<dbReference type="FunFam" id="3.90.226.10:FF:000013">
    <property type="entry name" value="Acetyl-coenzyme A carboxylase carboxyl transferase subunit beta"/>
    <property type="match status" value="1"/>
</dbReference>
<dbReference type="Gene3D" id="3.90.226.10">
    <property type="entry name" value="2-enoyl-CoA Hydratase, Chain A, domain 1"/>
    <property type="match status" value="1"/>
</dbReference>
<dbReference type="HAMAP" id="MF_01395">
    <property type="entry name" value="AcetylCoA_CT_beta"/>
    <property type="match status" value="1"/>
</dbReference>
<dbReference type="InterPro" id="IPR034733">
    <property type="entry name" value="AcCoA_carboxyl_beta"/>
</dbReference>
<dbReference type="InterPro" id="IPR000438">
    <property type="entry name" value="Acetyl_CoA_COase_Trfase_b_su"/>
</dbReference>
<dbReference type="InterPro" id="IPR029045">
    <property type="entry name" value="ClpP/crotonase-like_dom_sf"/>
</dbReference>
<dbReference type="InterPro" id="IPR011762">
    <property type="entry name" value="COA_CT_N"/>
</dbReference>
<dbReference type="InterPro" id="IPR041010">
    <property type="entry name" value="Znf-ACC"/>
</dbReference>
<dbReference type="NCBIfam" id="TIGR00515">
    <property type="entry name" value="accD"/>
    <property type="match status" value="1"/>
</dbReference>
<dbReference type="PANTHER" id="PTHR42995">
    <property type="entry name" value="ACETYL-COENZYME A CARBOXYLASE CARBOXYL TRANSFERASE SUBUNIT BETA, CHLOROPLASTIC"/>
    <property type="match status" value="1"/>
</dbReference>
<dbReference type="PANTHER" id="PTHR42995:SF5">
    <property type="entry name" value="ACETYL-COENZYME A CARBOXYLASE CARBOXYL TRANSFERASE SUBUNIT BETA, CHLOROPLASTIC"/>
    <property type="match status" value="1"/>
</dbReference>
<dbReference type="Pfam" id="PF01039">
    <property type="entry name" value="Carboxyl_trans"/>
    <property type="match status" value="1"/>
</dbReference>
<dbReference type="Pfam" id="PF17848">
    <property type="entry name" value="Zn_ribbon_ACC"/>
    <property type="match status" value="1"/>
</dbReference>
<dbReference type="PRINTS" id="PR01070">
    <property type="entry name" value="ACCCTRFRASEB"/>
</dbReference>
<dbReference type="SUPFAM" id="SSF52096">
    <property type="entry name" value="ClpP/crotonase"/>
    <property type="match status" value="1"/>
</dbReference>
<dbReference type="PROSITE" id="PS50980">
    <property type="entry name" value="COA_CT_NTER"/>
    <property type="match status" value="1"/>
</dbReference>
<accession>B4EZF5</accession>
<sequence length="320" mass="35518">MSWIEKILNKSNITSSRKANIPEGVWTKCDSCGQVLYRAELERNLEVCPKCDHHMRISARRRLETFLDTGSTTELGSELEPKDILKFRDSKKYKDRIAAAQKQTHEKDALVVMKGTLKEMPVVAASFEFAFMGGSMASVVGARFVRAVEQALEDNCPLICFSASGGARMQEALMSLMQMAKTSAALAKMQERGLPYISVMTDPTMGGVSASLAMLGDINVAEPKALIGFAGPRVIEQTVREKLPAGFQRSEFLLEKGAIDMIVRRPEMRDELAELLAKLTQYDLAKDEDELLGEEMIADDIESSDNEPEINIETNKKEDV</sequence>
<keyword id="KW-0067">ATP-binding</keyword>
<keyword id="KW-0963">Cytoplasm</keyword>
<keyword id="KW-0275">Fatty acid biosynthesis</keyword>
<keyword id="KW-0276">Fatty acid metabolism</keyword>
<keyword id="KW-0444">Lipid biosynthesis</keyword>
<keyword id="KW-0443">Lipid metabolism</keyword>
<keyword id="KW-0479">Metal-binding</keyword>
<keyword id="KW-0547">Nucleotide-binding</keyword>
<keyword id="KW-1185">Reference proteome</keyword>
<keyword id="KW-0808">Transferase</keyword>
<keyword id="KW-0862">Zinc</keyword>
<keyword id="KW-0863">Zinc-finger</keyword>
<name>ACCD_PROMH</name>